<feature type="chain" id="PRO_0000174768" description="Co-chaperonin GroES">
    <location>
        <begin position="1"/>
        <end position="94"/>
    </location>
</feature>
<accession>O68323</accession>
<keyword id="KW-0143">Chaperone</keyword>
<keyword id="KW-0963">Cytoplasm</keyword>
<sequence>MLQPIGDRVIVKVKDEEEKTVGGIVLASNAKKKPTEGEVVAVGEGAYASNGEKIPMSVKKGDVVLYDRYSGTNVEYEGEKYLVLHEKDILAIAK</sequence>
<evidence type="ECO:0000255" key="1">
    <source>
        <dbReference type="HAMAP-Rule" id="MF_00580"/>
    </source>
</evidence>
<protein>
    <recommendedName>
        <fullName evidence="1">Co-chaperonin GroES</fullName>
    </recommendedName>
    <alternativeName>
        <fullName evidence="1">10 kDa chaperonin</fullName>
    </alternativeName>
    <alternativeName>
        <fullName evidence="1">Chaperonin-10</fullName>
        <shortName evidence="1">Cpn10</shortName>
    </alternativeName>
</protein>
<reference key="1">
    <citation type="journal article" date="1998" name="Res. Microbiol.">
        <title>Characterization of the Lactobacillus helveticus groESL operon.</title>
        <authorList>
            <person name="Broadbent J.R."/>
            <person name="Oberg C.J."/>
            <person name="Wei L."/>
        </authorList>
    </citation>
    <scope>NUCLEOTIDE SEQUENCE [GENOMIC DNA]</scope>
    <source>
        <strain>Lh212</strain>
    </source>
</reference>
<proteinExistence type="inferred from homology"/>
<organism>
    <name type="scientific">Lactobacillus helveticus</name>
    <name type="common">Lactobacillus suntoryeus</name>
    <dbReference type="NCBI Taxonomy" id="1587"/>
    <lineage>
        <taxon>Bacteria</taxon>
        <taxon>Bacillati</taxon>
        <taxon>Bacillota</taxon>
        <taxon>Bacilli</taxon>
        <taxon>Lactobacillales</taxon>
        <taxon>Lactobacillaceae</taxon>
        <taxon>Lactobacillus</taxon>
    </lineage>
</organism>
<gene>
    <name evidence="1" type="primary">groES</name>
    <name evidence="1" type="synonym">groS</name>
</gene>
<name>CH10_LACHE</name>
<dbReference type="EMBL" id="AF031929">
    <property type="protein sequence ID" value="AAC29003.1"/>
    <property type="molecule type" value="Genomic_DNA"/>
</dbReference>
<dbReference type="RefSeq" id="WP_003627770.1">
    <property type="nucleotide sequence ID" value="NZ_WWEK01000080.1"/>
</dbReference>
<dbReference type="SMR" id="O68323"/>
<dbReference type="GeneID" id="83726427"/>
<dbReference type="eggNOG" id="COG0234">
    <property type="taxonomic scope" value="Bacteria"/>
</dbReference>
<dbReference type="OMA" id="EDFLIMR"/>
<dbReference type="OrthoDB" id="9806791at2"/>
<dbReference type="GO" id="GO:0005737">
    <property type="term" value="C:cytoplasm"/>
    <property type="evidence" value="ECO:0007669"/>
    <property type="project" value="UniProtKB-SubCell"/>
</dbReference>
<dbReference type="GO" id="GO:0005524">
    <property type="term" value="F:ATP binding"/>
    <property type="evidence" value="ECO:0007669"/>
    <property type="project" value="InterPro"/>
</dbReference>
<dbReference type="GO" id="GO:0046872">
    <property type="term" value="F:metal ion binding"/>
    <property type="evidence" value="ECO:0007669"/>
    <property type="project" value="TreeGrafter"/>
</dbReference>
<dbReference type="GO" id="GO:0044183">
    <property type="term" value="F:protein folding chaperone"/>
    <property type="evidence" value="ECO:0007669"/>
    <property type="project" value="InterPro"/>
</dbReference>
<dbReference type="GO" id="GO:0051087">
    <property type="term" value="F:protein-folding chaperone binding"/>
    <property type="evidence" value="ECO:0007669"/>
    <property type="project" value="TreeGrafter"/>
</dbReference>
<dbReference type="GO" id="GO:0051082">
    <property type="term" value="F:unfolded protein binding"/>
    <property type="evidence" value="ECO:0007669"/>
    <property type="project" value="TreeGrafter"/>
</dbReference>
<dbReference type="GO" id="GO:0051085">
    <property type="term" value="P:chaperone cofactor-dependent protein refolding"/>
    <property type="evidence" value="ECO:0007669"/>
    <property type="project" value="TreeGrafter"/>
</dbReference>
<dbReference type="CDD" id="cd00320">
    <property type="entry name" value="cpn10"/>
    <property type="match status" value="1"/>
</dbReference>
<dbReference type="FunFam" id="2.30.33.40:FF:000001">
    <property type="entry name" value="10 kDa chaperonin"/>
    <property type="match status" value="1"/>
</dbReference>
<dbReference type="Gene3D" id="2.30.33.40">
    <property type="entry name" value="GroES chaperonin"/>
    <property type="match status" value="1"/>
</dbReference>
<dbReference type="HAMAP" id="MF_00580">
    <property type="entry name" value="CH10"/>
    <property type="match status" value="1"/>
</dbReference>
<dbReference type="InterPro" id="IPR020818">
    <property type="entry name" value="Chaperonin_GroES"/>
</dbReference>
<dbReference type="InterPro" id="IPR037124">
    <property type="entry name" value="Chaperonin_GroES_sf"/>
</dbReference>
<dbReference type="InterPro" id="IPR018369">
    <property type="entry name" value="Chaprnonin_Cpn10_CS"/>
</dbReference>
<dbReference type="InterPro" id="IPR011032">
    <property type="entry name" value="GroES-like_sf"/>
</dbReference>
<dbReference type="NCBIfam" id="NF001531">
    <property type="entry name" value="PRK00364.2-2"/>
    <property type="match status" value="1"/>
</dbReference>
<dbReference type="NCBIfam" id="NF001533">
    <property type="entry name" value="PRK00364.2-4"/>
    <property type="match status" value="1"/>
</dbReference>
<dbReference type="NCBIfam" id="NF001534">
    <property type="entry name" value="PRK00364.2-5"/>
    <property type="match status" value="1"/>
</dbReference>
<dbReference type="PANTHER" id="PTHR10772">
    <property type="entry name" value="10 KDA HEAT SHOCK PROTEIN"/>
    <property type="match status" value="1"/>
</dbReference>
<dbReference type="PANTHER" id="PTHR10772:SF58">
    <property type="entry name" value="CO-CHAPERONIN GROES"/>
    <property type="match status" value="1"/>
</dbReference>
<dbReference type="Pfam" id="PF00166">
    <property type="entry name" value="Cpn10"/>
    <property type="match status" value="1"/>
</dbReference>
<dbReference type="PRINTS" id="PR00297">
    <property type="entry name" value="CHAPERONIN10"/>
</dbReference>
<dbReference type="SMART" id="SM00883">
    <property type="entry name" value="Cpn10"/>
    <property type="match status" value="1"/>
</dbReference>
<dbReference type="SUPFAM" id="SSF50129">
    <property type="entry name" value="GroES-like"/>
    <property type="match status" value="1"/>
</dbReference>
<dbReference type="PROSITE" id="PS00681">
    <property type="entry name" value="CHAPERONINS_CPN10"/>
    <property type="match status" value="1"/>
</dbReference>
<comment type="function">
    <text evidence="1">Together with the chaperonin GroEL, plays an essential role in assisting protein folding. The GroEL-GroES system forms a nano-cage that allows encapsulation of the non-native substrate proteins and provides a physical environment optimized to promote and accelerate protein folding. GroES binds to the apical surface of the GroEL ring, thereby capping the opening of the GroEL channel.</text>
</comment>
<comment type="subunit">
    <text evidence="1">Heptamer of 7 subunits arranged in a ring. Interacts with the chaperonin GroEL.</text>
</comment>
<comment type="subcellular location">
    <subcellularLocation>
        <location evidence="1">Cytoplasm</location>
    </subcellularLocation>
</comment>
<comment type="similarity">
    <text evidence="1">Belongs to the GroES chaperonin family.</text>
</comment>